<name>NADK_CYTH3</name>
<evidence type="ECO:0000255" key="1">
    <source>
        <dbReference type="HAMAP-Rule" id="MF_00361"/>
    </source>
</evidence>
<dbReference type="EC" id="2.7.1.23" evidence="1"/>
<dbReference type="EMBL" id="CP000383">
    <property type="protein sequence ID" value="ABG60644.1"/>
    <property type="molecule type" value="Genomic_DNA"/>
</dbReference>
<dbReference type="RefSeq" id="WP_011586751.1">
    <property type="nucleotide sequence ID" value="NC_008255.1"/>
</dbReference>
<dbReference type="SMR" id="Q11PL9"/>
<dbReference type="STRING" id="269798.CHU_3408"/>
<dbReference type="KEGG" id="chu:CHU_3408"/>
<dbReference type="eggNOG" id="COG0061">
    <property type="taxonomic scope" value="Bacteria"/>
</dbReference>
<dbReference type="HOGENOM" id="CLU_008831_0_3_10"/>
<dbReference type="OrthoDB" id="9774737at2"/>
<dbReference type="Proteomes" id="UP000001822">
    <property type="component" value="Chromosome"/>
</dbReference>
<dbReference type="GO" id="GO:0005737">
    <property type="term" value="C:cytoplasm"/>
    <property type="evidence" value="ECO:0007669"/>
    <property type="project" value="UniProtKB-SubCell"/>
</dbReference>
<dbReference type="GO" id="GO:0005524">
    <property type="term" value="F:ATP binding"/>
    <property type="evidence" value="ECO:0007669"/>
    <property type="project" value="UniProtKB-KW"/>
</dbReference>
<dbReference type="GO" id="GO:0046872">
    <property type="term" value="F:metal ion binding"/>
    <property type="evidence" value="ECO:0007669"/>
    <property type="project" value="UniProtKB-UniRule"/>
</dbReference>
<dbReference type="GO" id="GO:0051287">
    <property type="term" value="F:NAD binding"/>
    <property type="evidence" value="ECO:0007669"/>
    <property type="project" value="UniProtKB-ARBA"/>
</dbReference>
<dbReference type="GO" id="GO:0003951">
    <property type="term" value="F:NAD+ kinase activity"/>
    <property type="evidence" value="ECO:0007669"/>
    <property type="project" value="UniProtKB-UniRule"/>
</dbReference>
<dbReference type="GO" id="GO:0019674">
    <property type="term" value="P:NAD metabolic process"/>
    <property type="evidence" value="ECO:0007669"/>
    <property type="project" value="InterPro"/>
</dbReference>
<dbReference type="GO" id="GO:0006741">
    <property type="term" value="P:NADP biosynthetic process"/>
    <property type="evidence" value="ECO:0007669"/>
    <property type="project" value="UniProtKB-UniRule"/>
</dbReference>
<dbReference type="Gene3D" id="3.40.50.10330">
    <property type="entry name" value="Probable inorganic polyphosphate/atp-NAD kinase, domain 1"/>
    <property type="match status" value="1"/>
</dbReference>
<dbReference type="Gene3D" id="2.60.200.30">
    <property type="entry name" value="Probable inorganic polyphosphate/atp-NAD kinase, domain 2"/>
    <property type="match status" value="1"/>
</dbReference>
<dbReference type="HAMAP" id="MF_00361">
    <property type="entry name" value="NAD_kinase"/>
    <property type="match status" value="1"/>
</dbReference>
<dbReference type="InterPro" id="IPR017438">
    <property type="entry name" value="ATP-NAD_kinase_N"/>
</dbReference>
<dbReference type="InterPro" id="IPR017437">
    <property type="entry name" value="ATP-NAD_kinase_PpnK-typ_C"/>
</dbReference>
<dbReference type="InterPro" id="IPR016064">
    <property type="entry name" value="NAD/diacylglycerol_kinase_sf"/>
</dbReference>
<dbReference type="InterPro" id="IPR002504">
    <property type="entry name" value="NADK"/>
</dbReference>
<dbReference type="NCBIfam" id="NF002521">
    <property type="entry name" value="PRK01911.1"/>
    <property type="match status" value="1"/>
</dbReference>
<dbReference type="PANTHER" id="PTHR20275">
    <property type="entry name" value="NAD KINASE"/>
    <property type="match status" value="1"/>
</dbReference>
<dbReference type="PANTHER" id="PTHR20275:SF0">
    <property type="entry name" value="NAD KINASE"/>
    <property type="match status" value="1"/>
</dbReference>
<dbReference type="Pfam" id="PF01513">
    <property type="entry name" value="NAD_kinase"/>
    <property type="match status" value="1"/>
</dbReference>
<dbReference type="Pfam" id="PF20143">
    <property type="entry name" value="NAD_kinase_C"/>
    <property type="match status" value="1"/>
</dbReference>
<dbReference type="SUPFAM" id="SSF111331">
    <property type="entry name" value="NAD kinase/diacylglycerol kinase-like"/>
    <property type="match status" value="1"/>
</dbReference>
<comment type="function">
    <text evidence="1">Involved in the regulation of the intracellular balance of NAD and NADP, and is a key enzyme in the biosynthesis of NADP. Catalyzes specifically the phosphorylation on 2'-hydroxyl of the adenosine moiety of NAD to yield NADP.</text>
</comment>
<comment type="catalytic activity">
    <reaction evidence="1">
        <text>NAD(+) + ATP = ADP + NADP(+) + H(+)</text>
        <dbReference type="Rhea" id="RHEA:18629"/>
        <dbReference type="ChEBI" id="CHEBI:15378"/>
        <dbReference type="ChEBI" id="CHEBI:30616"/>
        <dbReference type="ChEBI" id="CHEBI:57540"/>
        <dbReference type="ChEBI" id="CHEBI:58349"/>
        <dbReference type="ChEBI" id="CHEBI:456216"/>
        <dbReference type="EC" id="2.7.1.23"/>
    </reaction>
</comment>
<comment type="cofactor">
    <cofactor evidence="1">
        <name>a divalent metal cation</name>
        <dbReference type="ChEBI" id="CHEBI:60240"/>
    </cofactor>
</comment>
<comment type="subcellular location">
    <subcellularLocation>
        <location evidence="1">Cytoplasm</location>
    </subcellularLocation>
</comment>
<comment type="similarity">
    <text evidence="1">Belongs to the NAD kinase family.</text>
</comment>
<keyword id="KW-0067">ATP-binding</keyword>
<keyword id="KW-0963">Cytoplasm</keyword>
<keyword id="KW-0418">Kinase</keyword>
<keyword id="KW-0520">NAD</keyword>
<keyword id="KW-0521">NADP</keyword>
<keyword id="KW-0547">Nucleotide-binding</keyword>
<keyword id="KW-1185">Reference proteome</keyword>
<keyword id="KW-0808">Transferase</keyword>
<protein>
    <recommendedName>
        <fullName evidence="1">NAD kinase</fullName>
        <ecNumber evidence="1">2.7.1.23</ecNumber>
    </recommendedName>
    <alternativeName>
        <fullName evidence="1">ATP-dependent NAD kinase</fullName>
    </alternativeName>
</protein>
<feature type="chain" id="PRO_1000059866" description="NAD kinase">
    <location>
        <begin position="1"/>
        <end position="292"/>
    </location>
</feature>
<feature type="active site" description="Proton acceptor" evidence="1">
    <location>
        <position position="74"/>
    </location>
</feature>
<feature type="binding site" evidence="1">
    <location>
        <begin position="74"/>
        <end position="75"/>
    </location>
    <ligand>
        <name>NAD(+)</name>
        <dbReference type="ChEBI" id="CHEBI:57540"/>
    </ligand>
</feature>
<feature type="binding site" evidence="1">
    <location>
        <begin position="147"/>
        <end position="148"/>
    </location>
    <ligand>
        <name>NAD(+)</name>
        <dbReference type="ChEBI" id="CHEBI:57540"/>
    </ligand>
</feature>
<feature type="binding site" evidence="1">
    <location>
        <position position="177"/>
    </location>
    <ligand>
        <name>NAD(+)</name>
        <dbReference type="ChEBI" id="CHEBI:57540"/>
    </ligand>
</feature>
<feature type="binding site" evidence="1">
    <location>
        <begin position="188"/>
        <end position="193"/>
    </location>
    <ligand>
        <name>NAD(+)</name>
        <dbReference type="ChEBI" id="CHEBI:57540"/>
    </ligand>
</feature>
<proteinExistence type="inferred from homology"/>
<reference key="1">
    <citation type="journal article" date="2007" name="Appl. Environ. Microbiol.">
        <title>Genome sequence of the cellulolytic gliding bacterium Cytophaga hutchinsonii.</title>
        <authorList>
            <person name="Xie G."/>
            <person name="Bruce D.C."/>
            <person name="Challacombe J.F."/>
            <person name="Chertkov O."/>
            <person name="Detter J.C."/>
            <person name="Gilna P."/>
            <person name="Han C.S."/>
            <person name="Lucas S."/>
            <person name="Misra M."/>
            <person name="Myers G.L."/>
            <person name="Richardson P."/>
            <person name="Tapia R."/>
            <person name="Thayer N."/>
            <person name="Thompson L.S."/>
            <person name="Brettin T.S."/>
            <person name="Henrissat B."/>
            <person name="Wilson D.B."/>
            <person name="McBride M.J."/>
        </authorList>
    </citation>
    <scope>NUCLEOTIDE SEQUENCE [LARGE SCALE GENOMIC DNA]</scope>
    <source>
        <strain>ATCC 33406 / DSM 1761 / JCM 20678 / CIP 103989 / IAM 12607 / NBRC 15051 / NCIMB 9469 / D465</strain>
    </source>
</reference>
<sequence>MIFALHGRPFKEDNIPYVQHLLYYLQKKEIQFLINESFVDYLVQCNILLPSFFTTFTNKTDLGKPDLMLSIGGDGTLLESATFIGDQNIPLVGINTGRLGFLATTPREELEGSVDELISGSYKLSERTLIKLISDEKLFGDLNFAMNEFALTKRDSSSMITVHTYIDGEFLNSYWADGLLVSTPTGSTGYSLSCGGPLVHPKTENFIITPISPHNLNVRPMIVPDSCHISFEIEGRNQNFLISLDSRAEIVSSNIKLSVKKEDFKIQLVELKNYNYYKTLRSKLNWGLDARN</sequence>
<organism>
    <name type="scientific">Cytophaga hutchinsonii (strain ATCC 33406 / DSM 1761 / CIP 103989 / NBRC 15051 / NCIMB 9469 / D465)</name>
    <dbReference type="NCBI Taxonomy" id="269798"/>
    <lineage>
        <taxon>Bacteria</taxon>
        <taxon>Pseudomonadati</taxon>
        <taxon>Bacteroidota</taxon>
        <taxon>Cytophagia</taxon>
        <taxon>Cytophagales</taxon>
        <taxon>Cytophagaceae</taxon>
        <taxon>Cytophaga</taxon>
    </lineage>
</organism>
<accession>Q11PL9</accession>
<gene>
    <name evidence="1" type="primary">nadK</name>
    <name type="ordered locus">CHU_3408</name>
</gene>